<evidence type="ECO:0000255" key="1">
    <source>
        <dbReference type="HAMAP-Rule" id="MF_00073"/>
    </source>
</evidence>
<comment type="function">
    <text evidence="1">Involved in transcription antitermination. Required for transcription of ribosomal RNA (rRNA) genes. Binds specifically to the boxA antiterminator sequence of the ribosomal RNA (rrn) operons.</text>
</comment>
<comment type="similarity">
    <text evidence="1">Belongs to the NusB family.</text>
</comment>
<keyword id="KW-0694">RNA-binding</keyword>
<keyword id="KW-0804">Transcription</keyword>
<keyword id="KW-0889">Transcription antitermination</keyword>
<keyword id="KW-0805">Transcription regulation</keyword>
<reference key="1">
    <citation type="journal article" date="2010" name="PLoS Genet.">
        <title>Genome sequence of the plant growth promoting endophytic bacterium Enterobacter sp. 638.</title>
        <authorList>
            <person name="Taghavi S."/>
            <person name="van der Lelie D."/>
            <person name="Hoffman A."/>
            <person name="Zhang Y.B."/>
            <person name="Walla M.D."/>
            <person name="Vangronsveld J."/>
            <person name="Newman L."/>
            <person name="Monchy S."/>
        </authorList>
    </citation>
    <scope>NUCLEOTIDE SEQUENCE [LARGE SCALE GENOMIC DNA]</scope>
    <source>
        <strain>638</strain>
    </source>
</reference>
<dbReference type="EMBL" id="CP000653">
    <property type="protein sequence ID" value="ABP59568.1"/>
    <property type="molecule type" value="Genomic_DNA"/>
</dbReference>
<dbReference type="RefSeq" id="WP_012016289.1">
    <property type="nucleotide sequence ID" value="NC_009436.1"/>
</dbReference>
<dbReference type="SMR" id="A4W788"/>
<dbReference type="STRING" id="399742.Ent638_0884"/>
<dbReference type="GeneID" id="93308011"/>
<dbReference type="KEGG" id="ent:Ent638_0884"/>
<dbReference type="eggNOG" id="COG0781">
    <property type="taxonomic scope" value="Bacteria"/>
</dbReference>
<dbReference type="HOGENOM" id="CLU_087843_4_1_6"/>
<dbReference type="OrthoDB" id="9789556at2"/>
<dbReference type="Proteomes" id="UP000000230">
    <property type="component" value="Chromosome"/>
</dbReference>
<dbReference type="GO" id="GO:0005829">
    <property type="term" value="C:cytosol"/>
    <property type="evidence" value="ECO:0007669"/>
    <property type="project" value="TreeGrafter"/>
</dbReference>
<dbReference type="GO" id="GO:0003723">
    <property type="term" value="F:RNA binding"/>
    <property type="evidence" value="ECO:0007669"/>
    <property type="project" value="UniProtKB-UniRule"/>
</dbReference>
<dbReference type="GO" id="GO:0006353">
    <property type="term" value="P:DNA-templated transcription termination"/>
    <property type="evidence" value="ECO:0007669"/>
    <property type="project" value="UniProtKB-UniRule"/>
</dbReference>
<dbReference type="GO" id="GO:0031564">
    <property type="term" value="P:transcription antitermination"/>
    <property type="evidence" value="ECO:0007669"/>
    <property type="project" value="UniProtKB-KW"/>
</dbReference>
<dbReference type="CDD" id="cd00619">
    <property type="entry name" value="Terminator_NusB"/>
    <property type="match status" value="1"/>
</dbReference>
<dbReference type="FunFam" id="1.10.940.10:FF:000001">
    <property type="entry name" value="Transcription antitermination factor NusB"/>
    <property type="match status" value="1"/>
</dbReference>
<dbReference type="Gene3D" id="1.10.940.10">
    <property type="entry name" value="NusB-like"/>
    <property type="match status" value="1"/>
</dbReference>
<dbReference type="HAMAP" id="MF_00073">
    <property type="entry name" value="NusB"/>
    <property type="match status" value="1"/>
</dbReference>
<dbReference type="InterPro" id="IPR035926">
    <property type="entry name" value="NusB-like_sf"/>
</dbReference>
<dbReference type="InterPro" id="IPR011605">
    <property type="entry name" value="NusB_fam"/>
</dbReference>
<dbReference type="InterPro" id="IPR006027">
    <property type="entry name" value="NusB_RsmB_TIM44"/>
</dbReference>
<dbReference type="NCBIfam" id="TIGR01951">
    <property type="entry name" value="nusB"/>
    <property type="match status" value="1"/>
</dbReference>
<dbReference type="PANTHER" id="PTHR11078:SF3">
    <property type="entry name" value="ANTITERMINATION NUSB DOMAIN-CONTAINING PROTEIN"/>
    <property type="match status" value="1"/>
</dbReference>
<dbReference type="PANTHER" id="PTHR11078">
    <property type="entry name" value="N UTILIZATION SUBSTANCE PROTEIN B-RELATED"/>
    <property type="match status" value="1"/>
</dbReference>
<dbReference type="Pfam" id="PF01029">
    <property type="entry name" value="NusB"/>
    <property type="match status" value="1"/>
</dbReference>
<dbReference type="SUPFAM" id="SSF48013">
    <property type="entry name" value="NusB-like"/>
    <property type="match status" value="1"/>
</dbReference>
<organism>
    <name type="scientific">Enterobacter sp. (strain 638)</name>
    <dbReference type="NCBI Taxonomy" id="399742"/>
    <lineage>
        <taxon>Bacteria</taxon>
        <taxon>Pseudomonadati</taxon>
        <taxon>Pseudomonadota</taxon>
        <taxon>Gammaproteobacteria</taxon>
        <taxon>Enterobacterales</taxon>
        <taxon>Enterobacteriaceae</taxon>
        <taxon>Enterobacter</taxon>
    </lineage>
</organism>
<feature type="chain" id="PRO_1000057497" description="Transcription antitermination protein NusB">
    <location>
        <begin position="1"/>
        <end position="139"/>
    </location>
</feature>
<name>NUSB_ENT38</name>
<gene>
    <name evidence="1" type="primary">nusB</name>
    <name type="ordered locus">Ent638_0884</name>
</gene>
<protein>
    <recommendedName>
        <fullName evidence="1">Transcription antitermination protein NusB</fullName>
    </recommendedName>
    <alternativeName>
        <fullName evidence="1">Antitermination factor NusB</fullName>
    </alternativeName>
</protein>
<sequence>MKPAARRRARECAVQALYSWQLSQNDIADVEYQFLAEQDVKDVDVLYFRELLSGVATNSAYLDGLMKPYLSRLLEELGQVEKAVLRIALFELAKRDDVPYKVAINEAIELAKTFGAEDSHKFVNGVLDKAAPAIRPRKK</sequence>
<proteinExistence type="inferred from homology"/>
<accession>A4W788</accession>